<evidence type="ECO:0000255" key="1">
    <source>
        <dbReference type="HAMAP-Rule" id="MF_00222"/>
    </source>
</evidence>
<gene>
    <name evidence="1" type="primary">aroE</name>
    <name type="ordered locus">BB4397</name>
</gene>
<protein>
    <recommendedName>
        <fullName evidence="1">Shikimate dehydrogenase (NADP(+))</fullName>
        <shortName evidence="1">SDH</shortName>
        <ecNumber evidence="1">1.1.1.25</ecNumber>
    </recommendedName>
</protein>
<sequence length="287" mass="29576">MTLPASPPRYAVIGNPIAHSRSPQIHAMFSAQTGRPLRYERLLAPVDGFLPTVQAFRESGGLGLNVTVPFKLEAYALAEARLSERARLAGAVNTLSWRDGAWHGCNTDGVGLVNDLLRLGVALAGARVLLVGAGGAARGVLQPLAAAGCARIHIVNRTAARAAELAAAWRAAAPRTGTQVSAGALAQAAEPGGWDVAINATASGLQDAAPDLPGGLYAPDALAYDMMYGARPTAFMRQAEADGAARCADGLGMLVGQAAESFHIWHGVRPDPGPVLLALRTELLAAG</sequence>
<name>AROE_BORBR</name>
<keyword id="KW-0028">Amino-acid biosynthesis</keyword>
<keyword id="KW-0057">Aromatic amino acid biosynthesis</keyword>
<keyword id="KW-0521">NADP</keyword>
<keyword id="KW-0560">Oxidoreductase</keyword>
<feature type="chain" id="PRO_0000325106" description="Shikimate dehydrogenase (NADP(+))">
    <location>
        <begin position="1"/>
        <end position="287"/>
    </location>
</feature>
<feature type="active site" description="Proton acceptor" evidence="1">
    <location>
        <position position="71"/>
    </location>
</feature>
<feature type="binding site" evidence="1">
    <location>
        <begin position="20"/>
        <end position="22"/>
    </location>
    <ligand>
        <name>shikimate</name>
        <dbReference type="ChEBI" id="CHEBI:36208"/>
    </ligand>
</feature>
<feature type="binding site" evidence="1">
    <location>
        <position position="67"/>
    </location>
    <ligand>
        <name>shikimate</name>
        <dbReference type="ChEBI" id="CHEBI:36208"/>
    </ligand>
</feature>
<feature type="binding site" evidence="1">
    <location>
        <position position="84"/>
    </location>
    <ligand>
        <name>NADP(+)</name>
        <dbReference type="ChEBI" id="CHEBI:58349"/>
    </ligand>
</feature>
<feature type="binding site" evidence="1">
    <location>
        <position position="93"/>
    </location>
    <ligand>
        <name>shikimate</name>
        <dbReference type="ChEBI" id="CHEBI:36208"/>
    </ligand>
</feature>
<feature type="binding site" evidence="1">
    <location>
        <position position="108"/>
    </location>
    <ligand>
        <name>shikimate</name>
        <dbReference type="ChEBI" id="CHEBI:36208"/>
    </ligand>
</feature>
<feature type="binding site" evidence="1">
    <location>
        <begin position="132"/>
        <end position="136"/>
    </location>
    <ligand>
        <name>NADP(+)</name>
        <dbReference type="ChEBI" id="CHEBI:58349"/>
    </ligand>
</feature>
<feature type="binding site" evidence="1">
    <location>
        <begin position="156"/>
        <end position="161"/>
    </location>
    <ligand>
        <name>NADP(+)</name>
        <dbReference type="ChEBI" id="CHEBI:58349"/>
    </ligand>
</feature>
<feature type="binding site" evidence="1">
    <location>
        <position position="226"/>
    </location>
    <ligand>
        <name>NADP(+)</name>
        <dbReference type="ChEBI" id="CHEBI:58349"/>
    </ligand>
</feature>
<feature type="binding site" evidence="1">
    <location>
        <position position="228"/>
    </location>
    <ligand>
        <name>shikimate</name>
        <dbReference type="ChEBI" id="CHEBI:36208"/>
    </ligand>
</feature>
<feature type="binding site" evidence="1">
    <location>
        <position position="250"/>
    </location>
    <ligand>
        <name>NADP(+)</name>
        <dbReference type="ChEBI" id="CHEBI:58349"/>
    </ligand>
</feature>
<dbReference type="EC" id="1.1.1.25" evidence="1"/>
<dbReference type="EMBL" id="BX640450">
    <property type="protein sequence ID" value="CAE34760.1"/>
    <property type="molecule type" value="Genomic_DNA"/>
</dbReference>
<dbReference type="RefSeq" id="WP_003814959.1">
    <property type="nucleotide sequence ID" value="NC_002927.3"/>
</dbReference>
<dbReference type="SMR" id="Q7WF83"/>
<dbReference type="GeneID" id="56477104"/>
<dbReference type="KEGG" id="bbr:BB4397"/>
<dbReference type="eggNOG" id="COG0169">
    <property type="taxonomic scope" value="Bacteria"/>
</dbReference>
<dbReference type="HOGENOM" id="CLU_044063_2_1_4"/>
<dbReference type="UniPathway" id="UPA00053">
    <property type="reaction ID" value="UER00087"/>
</dbReference>
<dbReference type="Proteomes" id="UP000001027">
    <property type="component" value="Chromosome"/>
</dbReference>
<dbReference type="GO" id="GO:0005829">
    <property type="term" value="C:cytosol"/>
    <property type="evidence" value="ECO:0007669"/>
    <property type="project" value="TreeGrafter"/>
</dbReference>
<dbReference type="GO" id="GO:0050661">
    <property type="term" value="F:NADP binding"/>
    <property type="evidence" value="ECO:0007669"/>
    <property type="project" value="InterPro"/>
</dbReference>
<dbReference type="GO" id="GO:0004764">
    <property type="term" value="F:shikimate 3-dehydrogenase (NADP+) activity"/>
    <property type="evidence" value="ECO:0007669"/>
    <property type="project" value="UniProtKB-UniRule"/>
</dbReference>
<dbReference type="GO" id="GO:0008652">
    <property type="term" value="P:amino acid biosynthetic process"/>
    <property type="evidence" value="ECO:0007669"/>
    <property type="project" value="UniProtKB-KW"/>
</dbReference>
<dbReference type="GO" id="GO:0009073">
    <property type="term" value="P:aromatic amino acid family biosynthetic process"/>
    <property type="evidence" value="ECO:0007669"/>
    <property type="project" value="UniProtKB-KW"/>
</dbReference>
<dbReference type="GO" id="GO:0009423">
    <property type="term" value="P:chorismate biosynthetic process"/>
    <property type="evidence" value="ECO:0007669"/>
    <property type="project" value="UniProtKB-UniRule"/>
</dbReference>
<dbReference type="GO" id="GO:0019632">
    <property type="term" value="P:shikimate metabolic process"/>
    <property type="evidence" value="ECO:0007669"/>
    <property type="project" value="InterPro"/>
</dbReference>
<dbReference type="CDD" id="cd01065">
    <property type="entry name" value="NAD_bind_Shikimate_DH"/>
    <property type="match status" value="1"/>
</dbReference>
<dbReference type="FunFam" id="3.40.50.10860:FF:000006">
    <property type="entry name" value="Shikimate dehydrogenase (NADP(+))"/>
    <property type="match status" value="1"/>
</dbReference>
<dbReference type="Gene3D" id="3.40.50.10860">
    <property type="entry name" value="Leucine Dehydrogenase, chain A, domain 1"/>
    <property type="match status" value="1"/>
</dbReference>
<dbReference type="Gene3D" id="3.40.50.720">
    <property type="entry name" value="NAD(P)-binding Rossmann-like Domain"/>
    <property type="match status" value="1"/>
</dbReference>
<dbReference type="HAMAP" id="MF_00222">
    <property type="entry name" value="Shikimate_DH_AroE"/>
    <property type="match status" value="1"/>
</dbReference>
<dbReference type="InterPro" id="IPR046346">
    <property type="entry name" value="Aminoacid_DH-like_N_sf"/>
</dbReference>
<dbReference type="InterPro" id="IPR036291">
    <property type="entry name" value="NAD(P)-bd_dom_sf"/>
</dbReference>
<dbReference type="InterPro" id="IPR041121">
    <property type="entry name" value="SDH_C"/>
</dbReference>
<dbReference type="InterPro" id="IPR011342">
    <property type="entry name" value="Shikimate_DH"/>
</dbReference>
<dbReference type="InterPro" id="IPR013708">
    <property type="entry name" value="Shikimate_DH-bd_N"/>
</dbReference>
<dbReference type="InterPro" id="IPR022893">
    <property type="entry name" value="Shikimate_DH_fam"/>
</dbReference>
<dbReference type="InterPro" id="IPR006151">
    <property type="entry name" value="Shikm_DH/Glu-tRNA_Rdtase"/>
</dbReference>
<dbReference type="NCBIfam" id="TIGR00507">
    <property type="entry name" value="aroE"/>
    <property type="match status" value="1"/>
</dbReference>
<dbReference type="NCBIfam" id="NF001310">
    <property type="entry name" value="PRK00258.1-2"/>
    <property type="match status" value="1"/>
</dbReference>
<dbReference type="PANTHER" id="PTHR21089:SF1">
    <property type="entry name" value="BIFUNCTIONAL 3-DEHYDROQUINATE DEHYDRATASE_SHIKIMATE DEHYDROGENASE, CHLOROPLASTIC"/>
    <property type="match status" value="1"/>
</dbReference>
<dbReference type="PANTHER" id="PTHR21089">
    <property type="entry name" value="SHIKIMATE DEHYDROGENASE"/>
    <property type="match status" value="1"/>
</dbReference>
<dbReference type="Pfam" id="PF18317">
    <property type="entry name" value="SDH_C"/>
    <property type="match status" value="1"/>
</dbReference>
<dbReference type="Pfam" id="PF01488">
    <property type="entry name" value="Shikimate_DH"/>
    <property type="match status" value="1"/>
</dbReference>
<dbReference type="Pfam" id="PF08501">
    <property type="entry name" value="Shikimate_dh_N"/>
    <property type="match status" value="1"/>
</dbReference>
<dbReference type="SUPFAM" id="SSF53223">
    <property type="entry name" value="Aminoacid dehydrogenase-like, N-terminal domain"/>
    <property type="match status" value="1"/>
</dbReference>
<dbReference type="SUPFAM" id="SSF51735">
    <property type="entry name" value="NAD(P)-binding Rossmann-fold domains"/>
    <property type="match status" value="1"/>
</dbReference>
<reference key="1">
    <citation type="journal article" date="2003" name="Nat. Genet.">
        <title>Comparative analysis of the genome sequences of Bordetella pertussis, Bordetella parapertussis and Bordetella bronchiseptica.</title>
        <authorList>
            <person name="Parkhill J."/>
            <person name="Sebaihia M."/>
            <person name="Preston A."/>
            <person name="Murphy L.D."/>
            <person name="Thomson N.R."/>
            <person name="Harris D.E."/>
            <person name="Holden M.T.G."/>
            <person name="Churcher C.M."/>
            <person name="Bentley S.D."/>
            <person name="Mungall K.L."/>
            <person name="Cerdeno-Tarraga A.-M."/>
            <person name="Temple L."/>
            <person name="James K.D."/>
            <person name="Harris B."/>
            <person name="Quail M.A."/>
            <person name="Achtman M."/>
            <person name="Atkin R."/>
            <person name="Baker S."/>
            <person name="Basham D."/>
            <person name="Bason N."/>
            <person name="Cherevach I."/>
            <person name="Chillingworth T."/>
            <person name="Collins M."/>
            <person name="Cronin A."/>
            <person name="Davis P."/>
            <person name="Doggett J."/>
            <person name="Feltwell T."/>
            <person name="Goble A."/>
            <person name="Hamlin N."/>
            <person name="Hauser H."/>
            <person name="Holroyd S."/>
            <person name="Jagels K."/>
            <person name="Leather S."/>
            <person name="Moule S."/>
            <person name="Norberczak H."/>
            <person name="O'Neil S."/>
            <person name="Ormond D."/>
            <person name="Price C."/>
            <person name="Rabbinowitsch E."/>
            <person name="Rutter S."/>
            <person name="Sanders M."/>
            <person name="Saunders D."/>
            <person name="Seeger K."/>
            <person name="Sharp S."/>
            <person name="Simmonds M."/>
            <person name="Skelton J."/>
            <person name="Squares R."/>
            <person name="Squares S."/>
            <person name="Stevens K."/>
            <person name="Unwin L."/>
            <person name="Whitehead S."/>
            <person name="Barrell B.G."/>
            <person name="Maskell D.J."/>
        </authorList>
    </citation>
    <scope>NUCLEOTIDE SEQUENCE [LARGE SCALE GENOMIC DNA]</scope>
    <source>
        <strain>ATCC BAA-588 / NCTC 13252 / RB50</strain>
    </source>
</reference>
<organism>
    <name type="scientific">Bordetella bronchiseptica (strain ATCC BAA-588 / NCTC 13252 / RB50)</name>
    <name type="common">Alcaligenes bronchisepticus</name>
    <dbReference type="NCBI Taxonomy" id="257310"/>
    <lineage>
        <taxon>Bacteria</taxon>
        <taxon>Pseudomonadati</taxon>
        <taxon>Pseudomonadota</taxon>
        <taxon>Betaproteobacteria</taxon>
        <taxon>Burkholderiales</taxon>
        <taxon>Alcaligenaceae</taxon>
        <taxon>Bordetella</taxon>
    </lineage>
</organism>
<accession>Q7WF83</accession>
<proteinExistence type="inferred from homology"/>
<comment type="function">
    <text evidence="1">Involved in the biosynthesis of the chorismate, which leads to the biosynthesis of aromatic amino acids. Catalyzes the reversible NADPH linked reduction of 3-dehydroshikimate (DHSA) to yield shikimate (SA).</text>
</comment>
<comment type="catalytic activity">
    <reaction evidence="1">
        <text>shikimate + NADP(+) = 3-dehydroshikimate + NADPH + H(+)</text>
        <dbReference type="Rhea" id="RHEA:17737"/>
        <dbReference type="ChEBI" id="CHEBI:15378"/>
        <dbReference type="ChEBI" id="CHEBI:16630"/>
        <dbReference type="ChEBI" id="CHEBI:36208"/>
        <dbReference type="ChEBI" id="CHEBI:57783"/>
        <dbReference type="ChEBI" id="CHEBI:58349"/>
        <dbReference type="EC" id="1.1.1.25"/>
    </reaction>
</comment>
<comment type="pathway">
    <text evidence="1">Metabolic intermediate biosynthesis; chorismate biosynthesis; chorismate from D-erythrose 4-phosphate and phosphoenolpyruvate: step 4/7.</text>
</comment>
<comment type="subunit">
    <text evidence="1">Homodimer.</text>
</comment>
<comment type="similarity">
    <text evidence="1">Belongs to the shikimate dehydrogenase family.</text>
</comment>